<reference key="1">
    <citation type="journal article" date="2011" name="Appl. Environ. Microbiol.">
        <title>Genomic potential of Marinobacter aquaeolei, a biogeochemical 'opportunitroph'.</title>
        <authorList>
            <person name="Singer E."/>
            <person name="Webb E.A."/>
            <person name="Nelson W.C."/>
            <person name="Heidelberg J.F."/>
            <person name="Ivanova N."/>
            <person name="Pati A."/>
            <person name="Edwards K.J."/>
        </authorList>
    </citation>
    <scope>NUCLEOTIDE SEQUENCE [LARGE SCALE GENOMIC DNA]</scope>
    <source>
        <strain>ATCC 700491 / DSM 11845 / VT8</strain>
    </source>
</reference>
<feature type="chain" id="PRO_0000290493" description="1-(5-phosphoribosyl)-5-[(5-phosphoribosylamino)methylideneamino] imidazole-4-carboxamide isomerase">
    <location>
        <begin position="1"/>
        <end position="245"/>
    </location>
</feature>
<feature type="active site" description="Proton acceptor" evidence="1">
    <location>
        <position position="8"/>
    </location>
</feature>
<feature type="active site" description="Proton donor" evidence="1">
    <location>
        <position position="130"/>
    </location>
</feature>
<protein>
    <recommendedName>
        <fullName evidence="1">1-(5-phosphoribosyl)-5-[(5-phosphoribosylamino)methylideneamino] imidazole-4-carboxamide isomerase</fullName>
        <ecNumber evidence="1">5.3.1.16</ecNumber>
    </recommendedName>
    <alternativeName>
        <fullName evidence="1">Phosphoribosylformimino-5-aminoimidazole carboxamide ribotide isomerase</fullName>
    </alternativeName>
</protein>
<dbReference type="EC" id="5.3.1.16" evidence="1"/>
<dbReference type="EMBL" id="CP000514">
    <property type="protein sequence ID" value="ABM20245.1"/>
    <property type="molecule type" value="Genomic_DNA"/>
</dbReference>
<dbReference type="RefSeq" id="WP_011786613.1">
    <property type="nucleotide sequence ID" value="NC_008740.1"/>
</dbReference>
<dbReference type="SMR" id="A1U5H6"/>
<dbReference type="STRING" id="351348.Maqu_3171"/>
<dbReference type="KEGG" id="maq:Maqu_3171"/>
<dbReference type="eggNOG" id="COG0106">
    <property type="taxonomic scope" value="Bacteria"/>
</dbReference>
<dbReference type="HOGENOM" id="CLU_048577_1_1_6"/>
<dbReference type="OrthoDB" id="9807749at2"/>
<dbReference type="UniPathway" id="UPA00031">
    <property type="reaction ID" value="UER00009"/>
</dbReference>
<dbReference type="Proteomes" id="UP000000998">
    <property type="component" value="Chromosome"/>
</dbReference>
<dbReference type="GO" id="GO:0005737">
    <property type="term" value="C:cytoplasm"/>
    <property type="evidence" value="ECO:0007669"/>
    <property type="project" value="UniProtKB-SubCell"/>
</dbReference>
<dbReference type="GO" id="GO:0003949">
    <property type="term" value="F:1-(5-phosphoribosyl)-5-[(5-phosphoribosylamino)methylideneamino]imidazole-4-carboxamide isomerase activity"/>
    <property type="evidence" value="ECO:0007669"/>
    <property type="project" value="UniProtKB-UniRule"/>
</dbReference>
<dbReference type="GO" id="GO:0000105">
    <property type="term" value="P:L-histidine biosynthetic process"/>
    <property type="evidence" value="ECO:0007669"/>
    <property type="project" value="UniProtKB-UniRule"/>
</dbReference>
<dbReference type="GO" id="GO:0000162">
    <property type="term" value="P:L-tryptophan biosynthetic process"/>
    <property type="evidence" value="ECO:0007669"/>
    <property type="project" value="TreeGrafter"/>
</dbReference>
<dbReference type="CDD" id="cd04732">
    <property type="entry name" value="HisA"/>
    <property type="match status" value="1"/>
</dbReference>
<dbReference type="FunFam" id="3.20.20.70:FF:000009">
    <property type="entry name" value="1-(5-phosphoribosyl)-5-[(5-phosphoribosylamino)methylideneamino] imidazole-4-carboxamide isomerase"/>
    <property type="match status" value="1"/>
</dbReference>
<dbReference type="Gene3D" id="3.20.20.70">
    <property type="entry name" value="Aldolase class I"/>
    <property type="match status" value="1"/>
</dbReference>
<dbReference type="HAMAP" id="MF_01014">
    <property type="entry name" value="HisA"/>
    <property type="match status" value="1"/>
</dbReference>
<dbReference type="InterPro" id="IPR013785">
    <property type="entry name" value="Aldolase_TIM"/>
</dbReference>
<dbReference type="InterPro" id="IPR006062">
    <property type="entry name" value="His_biosynth"/>
</dbReference>
<dbReference type="InterPro" id="IPR006063">
    <property type="entry name" value="HisA_bact_arch"/>
</dbReference>
<dbReference type="InterPro" id="IPR044524">
    <property type="entry name" value="Isoase_HisA-like"/>
</dbReference>
<dbReference type="InterPro" id="IPR023016">
    <property type="entry name" value="Isoase_HisA-like_bact"/>
</dbReference>
<dbReference type="InterPro" id="IPR011060">
    <property type="entry name" value="RibuloseP-bd_barrel"/>
</dbReference>
<dbReference type="NCBIfam" id="TIGR00007">
    <property type="entry name" value="1-(5-phosphoribosyl)-5-[(5-phosphoribosylamino)methylideneamino]imidazole-4-carboxamide isomerase"/>
    <property type="match status" value="1"/>
</dbReference>
<dbReference type="NCBIfam" id="NF010112">
    <property type="entry name" value="PRK13585.1"/>
    <property type="match status" value="1"/>
</dbReference>
<dbReference type="PANTHER" id="PTHR43090">
    <property type="entry name" value="1-(5-PHOSPHORIBOSYL)-5-[(5-PHOSPHORIBOSYLAMINO)METHYLIDENEAMINO] IMIDAZOLE-4-CARBOXAMIDE ISOMERASE"/>
    <property type="match status" value="1"/>
</dbReference>
<dbReference type="PANTHER" id="PTHR43090:SF2">
    <property type="entry name" value="1-(5-PHOSPHORIBOSYL)-5-[(5-PHOSPHORIBOSYLAMINO)METHYLIDENEAMINO] IMIDAZOLE-4-CARBOXAMIDE ISOMERASE"/>
    <property type="match status" value="1"/>
</dbReference>
<dbReference type="Pfam" id="PF00977">
    <property type="entry name" value="His_biosynth"/>
    <property type="match status" value="1"/>
</dbReference>
<dbReference type="SUPFAM" id="SSF51366">
    <property type="entry name" value="Ribulose-phoshate binding barrel"/>
    <property type="match status" value="1"/>
</dbReference>
<evidence type="ECO:0000255" key="1">
    <source>
        <dbReference type="HAMAP-Rule" id="MF_01014"/>
    </source>
</evidence>
<name>HIS4_MARN8</name>
<gene>
    <name evidence="1" type="primary">hisA</name>
    <name type="ordered locus">Maqu_3171</name>
</gene>
<keyword id="KW-0028">Amino-acid biosynthesis</keyword>
<keyword id="KW-0963">Cytoplasm</keyword>
<keyword id="KW-0368">Histidine biosynthesis</keyword>
<keyword id="KW-0413">Isomerase</keyword>
<sequence>MLIIPAIDLKDGKCVRLRQGRMEDSTVFGDDPVDMATKWVDAGARRLHLVDLNGAFAGEPVNGEIVKAIAVKYPNLPIQIGGGIRSAETIEAYLKAGVQWVIIGTKAVKEPEFVTEMCKEFPGHIIVGLDAKDGRVATDGWAEVSEVMAVDLAKRFANDGVSSIVYTDIARDGMMQGVNVEATAKLAEEGGIPVIASGGVTNMDDLKRLATVADTGVIGAITGRAIYEGTLDVAEAQAYCDSLKN</sequence>
<proteinExistence type="inferred from homology"/>
<accession>A1U5H6</accession>
<organism>
    <name type="scientific">Marinobacter nauticus (strain ATCC 700491 / DSM 11845 / VT8)</name>
    <name type="common">Marinobacter aquaeolei</name>
    <dbReference type="NCBI Taxonomy" id="351348"/>
    <lineage>
        <taxon>Bacteria</taxon>
        <taxon>Pseudomonadati</taxon>
        <taxon>Pseudomonadota</taxon>
        <taxon>Gammaproteobacteria</taxon>
        <taxon>Pseudomonadales</taxon>
        <taxon>Marinobacteraceae</taxon>
        <taxon>Marinobacter</taxon>
    </lineage>
</organism>
<comment type="catalytic activity">
    <reaction evidence="1">
        <text>1-(5-phospho-beta-D-ribosyl)-5-[(5-phospho-beta-D-ribosylamino)methylideneamino]imidazole-4-carboxamide = 5-[(5-phospho-1-deoxy-D-ribulos-1-ylimino)methylamino]-1-(5-phospho-beta-D-ribosyl)imidazole-4-carboxamide</text>
        <dbReference type="Rhea" id="RHEA:15469"/>
        <dbReference type="ChEBI" id="CHEBI:58435"/>
        <dbReference type="ChEBI" id="CHEBI:58525"/>
        <dbReference type="EC" id="5.3.1.16"/>
    </reaction>
</comment>
<comment type="pathway">
    <text evidence="1">Amino-acid biosynthesis; L-histidine biosynthesis; L-histidine from 5-phospho-alpha-D-ribose 1-diphosphate: step 4/9.</text>
</comment>
<comment type="subcellular location">
    <subcellularLocation>
        <location evidence="1">Cytoplasm</location>
    </subcellularLocation>
</comment>
<comment type="similarity">
    <text evidence="1">Belongs to the HisA/HisF family.</text>
</comment>